<proteinExistence type="inferred from homology"/>
<sequence>MPRSTNKGPFVDHHLMKKVDQAQKEGSKRPIKTWSRRSMVVPEMVGLTIAIHNGRQHVPVYISENMVGHKLGEFAITRTFRAHSGDRKAKKEGEK</sequence>
<organism>
    <name type="scientific">Coxiella burnetii (strain RSA 331 / Henzerling II)</name>
    <dbReference type="NCBI Taxonomy" id="360115"/>
    <lineage>
        <taxon>Bacteria</taxon>
        <taxon>Pseudomonadati</taxon>
        <taxon>Pseudomonadota</taxon>
        <taxon>Gammaproteobacteria</taxon>
        <taxon>Legionellales</taxon>
        <taxon>Coxiellaceae</taxon>
        <taxon>Coxiella</taxon>
    </lineage>
</organism>
<keyword id="KW-0687">Ribonucleoprotein</keyword>
<keyword id="KW-0689">Ribosomal protein</keyword>
<keyword id="KW-0694">RNA-binding</keyword>
<keyword id="KW-0699">rRNA-binding</keyword>
<evidence type="ECO:0000255" key="1">
    <source>
        <dbReference type="HAMAP-Rule" id="MF_00531"/>
    </source>
</evidence>
<evidence type="ECO:0000305" key="2"/>
<name>RS19_COXBR</name>
<dbReference type="EMBL" id="CP000890">
    <property type="protein sequence ID" value="ABX78784.1"/>
    <property type="molecule type" value="Genomic_DNA"/>
</dbReference>
<dbReference type="RefSeq" id="WP_005771538.1">
    <property type="nucleotide sequence ID" value="NC_010117.1"/>
</dbReference>
<dbReference type="SMR" id="A9NAM8"/>
<dbReference type="KEGG" id="cbs:COXBURSA331_A0341"/>
<dbReference type="HOGENOM" id="CLU_144911_0_1_6"/>
<dbReference type="GO" id="GO:0005737">
    <property type="term" value="C:cytoplasm"/>
    <property type="evidence" value="ECO:0007669"/>
    <property type="project" value="UniProtKB-ARBA"/>
</dbReference>
<dbReference type="GO" id="GO:0015935">
    <property type="term" value="C:small ribosomal subunit"/>
    <property type="evidence" value="ECO:0007669"/>
    <property type="project" value="InterPro"/>
</dbReference>
<dbReference type="GO" id="GO:0019843">
    <property type="term" value="F:rRNA binding"/>
    <property type="evidence" value="ECO:0007669"/>
    <property type="project" value="UniProtKB-UniRule"/>
</dbReference>
<dbReference type="GO" id="GO:0003735">
    <property type="term" value="F:structural constituent of ribosome"/>
    <property type="evidence" value="ECO:0007669"/>
    <property type="project" value="InterPro"/>
</dbReference>
<dbReference type="GO" id="GO:0000028">
    <property type="term" value="P:ribosomal small subunit assembly"/>
    <property type="evidence" value="ECO:0007669"/>
    <property type="project" value="TreeGrafter"/>
</dbReference>
<dbReference type="GO" id="GO:0006412">
    <property type="term" value="P:translation"/>
    <property type="evidence" value="ECO:0007669"/>
    <property type="project" value="UniProtKB-UniRule"/>
</dbReference>
<dbReference type="FunFam" id="3.30.860.10:FF:000001">
    <property type="entry name" value="30S ribosomal protein S19"/>
    <property type="match status" value="1"/>
</dbReference>
<dbReference type="Gene3D" id="3.30.860.10">
    <property type="entry name" value="30s Ribosomal Protein S19, Chain A"/>
    <property type="match status" value="1"/>
</dbReference>
<dbReference type="HAMAP" id="MF_00531">
    <property type="entry name" value="Ribosomal_uS19"/>
    <property type="match status" value="1"/>
</dbReference>
<dbReference type="InterPro" id="IPR002222">
    <property type="entry name" value="Ribosomal_uS19"/>
</dbReference>
<dbReference type="InterPro" id="IPR005732">
    <property type="entry name" value="Ribosomal_uS19_bac-type"/>
</dbReference>
<dbReference type="InterPro" id="IPR020934">
    <property type="entry name" value="Ribosomal_uS19_CS"/>
</dbReference>
<dbReference type="InterPro" id="IPR023575">
    <property type="entry name" value="Ribosomal_uS19_SF"/>
</dbReference>
<dbReference type="NCBIfam" id="TIGR01050">
    <property type="entry name" value="rpsS_bact"/>
    <property type="match status" value="1"/>
</dbReference>
<dbReference type="PANTHER" id="PTHR11880">
    <property type="entry name" value="RIBOSOMAL PROTEIN S19P FAMILY MEMBER"/>
    <property type="match status" value="1"/>
</dbReference>
<dbReference type="PANTHER" id="PTHR11880:SF8">
    <property type="entry name" value="SMALL RIBOSOMAL SUBUNIT PROTEIN US19M"/>
    <property type="match status" value="1"/>
</dbReference>
<dbReference type="Pfam" id="PF00203">
    <property type="entry name" value="Ribosomal_S19"/>
    <property type="match status" value="1"/>
</dbReference>
<dbReference type="PIRSF" id="PIRSF002144">
    <property type="entry name" value="Ribosomal_S19"/>
    <property type="match status" value="1"/>
</dbReference>
<dbReference type="PRINTS" id="PR00975">
    <property type="entry name" value="RIBOSOMALS19"/>
</dbReference>
<dbReference type="SUPFAM" id="SSF54570">
    <property type="entry name" value="Ribosomal protein S19"/>
    <property type="match status" value="1"/>
</dbReference>
<dbReference type="PROSITE" id="PS00323">
    <property type="entry name" value="RIBOSOMAL_S19"/>
    <property type="match status" value="1"/>
</dbReference>
<feature type="chain" id="PRO_1000081767" description="Small ribosomal subunit protein uS19">
    <location>
        <begin position="1"/>
        <end position="95"/>
    </location>
</feature>
<protein>
    <recommendedName>
        <fullName evidence="1">Small ribosomal subunit protein uS19</fullName>
    </recommendedName>
    <alternativeName>
        <fullName evidence="2">30S ribosomal protein S19</fullName>
    </alternativeName>
</protein>
<accession>A9NAM8</accession>
<reference key="1">
    <citation type="submission" date="2007-11" db="EMBL/GenBank/DDBJ databases">
        <title>Genome sequencing of phylogenetically and phenotypically diverse Coxiella burnetii isolates.</title>
        <authorList>
            <person name="Seshadri R."/>
            <person name="Samuel J.E."/>
        </authorList>
    </citation>
    <scope>NUCLEOTIDE SEQUENCE [LARGE SCALE GENOMIC DNA]</scope>
    <source>
        <strain>RSA 331 / Henzerling II</strain>
    </source>
</reference>
<gene>
    <name evidence="1" type="primary">rpsS</name>
    <name type="ordered locus">COXBURSA331_A0341</name>
</gene>
<comment type="function">
    <text evidence="1">Protein S19 forms a complex with S13 that binds strongly to the 16S ribosomal RNA.</text>
</comment>
<comment type="similarity">
    <text evidence="1">Belongs to the universal ribosomal protein uS19 family.</text>
</comment>